<accession>B9K885</accession>
<proteinExistence type="inferred from homology"/>
<name>RS10_THENN</name>
<sequence length="102" mass="11665">MPGQRIRIKLKAYDHELLDESAKKIVEVAKSTNSKVSGPIPLPTERTLYCVLRSPMKHKDSREHFEKRVHKRLIDIIDPSPKTIDALMRINLPAGVDVEIKL</sequence>
<organism>
    <name type="scientific">Thermotoga neapolitana (strain ATCC 49049 / DSM 4359 / NBRC 107923 / NS-E)</name>
    <dbReference type="NCBI Taxonomy" id="309803"/>
    <lineage>
        <taxon>Bacteria</taxon>
        <taxon>Thermotogati</taxon>
        <taxon>Thermotogota</taxon>
        <taxon>Thermotogae</taxon>
        <taxon>Thermotogales</taxon>
        <taxon>Thermotogaceae</taxon>
        <taxon>Thermotoga</taxon>
    </lineage>
</organism>
<comment type="function">
    <text evidence="1">Involved in the binding of tRNA to the ribosomes.</text>
</comment>
<comment type="subunit">
    <text evidence="1">Part of the 30S ribosomal subunit.</text>
</comment>
<comment type="similarity">
    <text evidence="1">Belongs to the universal ribosomal protein uS10 family.</text>
</comment>
<feature type="chain" id="PRO_1000146085" description="Small ribosomal subunit protein uS10">
    <location>
        <begin position="1"/>
        <end position="102"/>
    </location>
</feature>
<keyword id="KW-0687">Ribonucleoprotein</keyword>
<keyword id="KW-0689">Ribosomal protein</keyword>
<protein>
    <recommendedName>
        <fullName evidence="1">Small ribosomal subunit protein uS10</fullName>
    </recommendedName>
    <alternativeName>
        <fullName evidence="2">30S ribosomal protein S10</fullName>
    </alternativeName>
</protein>
<evidence type="ECO:0000255" key="1">
    <source>
        <dbReference type="HAMAP-Rule" id="MF_00508"/>
    </source>
</evidence>
<evidence type="ECO:0000305" key="2"/>
<gene>
    <name evidence="1" type="primary">rpsJ</name>
    <name type="ordered locus">CTN_0992</name>
</gene>
<reference key="1">
    <citation type="submission" date="2007-11" db="EMBL/GenBank/DDBJ databases">
        <title>The genome sequence of the hyperthermophilic bacterium Thermotoga neapolitana.</title>
        <authorList>
            <person name="Lim S.K."/>
            <person name="Kim J.S."/>
            <person name="Cha S.H."/>
            <person name="Park B.C."/>
            <person name="Lee D.S."/>
            <person name="Tae H.S."/>
            <person name="Kim S.-J."/>
            <person name="Kim J.J."/>
            <person name="Park K.J."/>
            <person name="Lee S.Y."/>
        </authorList>
    </citation>
    <scope>NUCLEOTIDE SEQUENCE [LARGE SCALE GENOMIC DNA]</scope>
    <source>
        <strain>ATCC 49049 / DSM 4359 / NBRC 107923 / NS-E</strain>
    </source>
</reference>
<dbReference type="EMBL" id="CP000916">
    <property type="protein sequence ID" value="ACM23168.1"/>
    <property type="molecule type" value="Genomic_DNA"/>
</dbReference>
<dbReference type="RefSeq" id="WP_015919485.1">
    <property type="nucleotide sequence ID" value="NC_011978.1"/>
</dbReference>
<dbReference type="SMR" id="B9K885"/>
<dbReference type="STRING" id="309803.CTN_0992"/>
<dbReference type="KEGG" id="tna:CTN_0992"/>
<dbReference type="eggNOG" id="COG0051">
    <property type="taxonomic scope" value="Bacteria"/>
</dbReference>
<dbReference type="HOGENOM" id="CLU_122625_1_3_0"/>
<dbReference type="Proteomes" id="UP000000445">
    <property type="component" value="Chromosome"/>
</dbReference>
<dbReference type="GO" id="GO:1990904">
    <property type="term" value="C:ribonucleoprotein complex"/>
    <property type="evidence" value="ECO:0007669"/>
    <property type="project" value="UniProtKB-KW"/>
</dbReference>
<dbReference type="GO" id="GO:0005840">
    <property type="term" value="C:ribosome"/>
    <property type="evidence" value="ECO:0007669"/>
    <property type="project" value="UniProtKB-KW"/>
</dbReference>
<dbReference type="GO" id="GO:0003735">
    <property type="term" value="F:structural constituent of ribosome"/>
    <property type="evidence" value="ECO:0007669"/>
    <property type="project" value="InterPro"/>
</dbReference>
<dbReference type="GO" id="GO:0000049">
    <property type="term" value="F:tRNA binding"/>
    <property type="evidence" value="ECO:0007669"/>
    <property type="project" value="UniProtKB-UniRule"/>
</dbReference>
<dbReference type="GO" id="GO:0006412">
    <property type="term" value="P:translation"/>
    <property type="evidence" value="ECO:0007669"/>
    <property type="project" value="UniProtKB-UniRule"/>
</dbReference>
<dbReference type="FunFam" id="3.30.70.600:FF:000001">
    <property type="entry name" value="30S ribosomal protein S10"/>
    <property type="match status" value="1"/>
</dbReference>
<dbReference type="Gene3D" id="3.30.70.600">
    <property type="entry name" value="Ribosomal protein S10 domain"/>
    <property type="match status" value="1"/>
</dbReference>
<dbReference type="HAMAP" id="MF_00508">
    <property type="entry name" value="Ribosomal_uS10"/>
    <property type="match status" value="1"/>
</dbReference>
<dbReference type="InterPro" id="IPR001848">
    <property type="entry name" value="Ribosomal_uS10"/>
</dbReference>
<dbReference type="InterPro" id="IPR018268">
    <property type="entry name" value="Ribosomal_uS10_CS"/>
</dbReference>
<dbReference type="InterPro" id="IPR027486">
    <property type="entry name" value="Ribosomal_uS10_dom"/>
</dbReference>
<dbReference type="InterPro" id="IPR036838">
    <property type="entry name" value="Ribosomal_uS10_dom_sf"/>
</dbReference>
<dbReference type="NCBIfam" id="NF001861">
    <property type="entry name" value="PRK00596.1"/>
    <property type="match status" value="1"/>
</dbReference>
<dbReference type="NCBIfam" id="TIGR01049">
    <property type="entry name" value="rpsJ_bact"/>
    <property type="match status" value="1"/>
</dbReference>
<dbReference type="PANTHER" id="PTHR11700">
    <property type="entry name" value="30S RIBOSOMAL PROTEIN S10 FAMILY MEMBER"/>
    <property type="match status" value="1"/>
</dbReference>
<dbReference type="Pfam" id="PF00338">
    <property type="entry name" value="Ribosomal_S10"/>
    <property type="match status" value="1"/>
</dbReference>
<dbReference type="PRINTS" id="PR00971">
    <property type="entry name" value="RIBOSOMALS10"/>
</dbReference>
<dbReference type="SMART" id="SM01403">
    <property type="entry name" value="Ribosomal_S10"/>
    <property type="match status" value="1"/>
</dbReference>
<dbReference type="SUPFAM" id="SSF54999">
    <property type="entry name" value="Ribosomal protein S10"/>
    <property type="match status" value="1"/>
</dbReference>
<dbReference type="PROSITE" id="PS00361">
    <property type="entry name" value="RIBOSOMAL_S10"/>
    <property type="match status" value="1"/>
</dbReference>